<feature type="chain" id="PRO_0000183411" description="Cytochrome c oxidase subunit 1">
    <location>
        <begin position="1"/>
        <end position="516"/>
    </location>
</feature>
<feature type="topological domain" description="Mitochondrial matrix" evidence="2">
    <location>
        <begin position="1"/>
        <end position="11"/>
    </location>
</feature>
<feature type="transmembrane region" description="Helical; Name=I" evidence="2">
    <location>
        <begin position="12"/>
        <end position="40"/>
    </location>
</feature>
<feature type="topological domain" description="Mitochondrial intermembrane" evidence="2">
    <location>
        <begin position="41"/>
        <end position="50"/>
    </location>
</feature>
<feature type="transmembrane region" description="Helical; Name=II" evidence="2">
    <location>
        <begin position="51"/>
        <end position="86"/>
    </location>
</feature>
<feature type="topological domain" description="Mitochondrial matrix" evidence="2">
    <location>
        <begin position="87"/>
        <end position="94"/>
    </location>
</feature>
<feature type="transmembrane region" description="Helical; Name=III" evidence="2">
    <location>
        <begin position="95"/>
        <end position="117"/>
    </location>
</feature>
<feature type="topological domain" description="Mitochondrial intermembrane" evidence="2">
    <location>
        <begin position="118"/>
        <end position="140"/>
    </location>
</feature>
<feature type="transmembrane region" description="Helical; Name=IV" evidence="2">
    <location>
        <begin position="141"/>
        <end position="170"/>
    </location>
</feature>
<feature type="topological domain" description="Mitochondrial matrix" evidence="2">
    <location>
        <begin position="171"/>
        <end position="182"/>
    </location>
</feature>
<feature type="transmembrane region" description="Helical; Name=V" evidence="2">
    <location>
        <begin position="183"/>
        <end position="212"/>
    </location>
</feature>
<feature type="topological domain" description="Mitochondrial intermembrane" evidence="2">
    <location>
        <begin position="213"/>
        <end position="227"/>
    </location>
</feature>
<feature type="transmembrane region" description="Helical; Name=VI" evidence="2">
    <location>
        <begin position="228"/>
        <end position="261"/>
    </location>
</feature>
<feature type="topological domain" description="Mitochondrial matrix" evidence="2">
    <location>
        <begin position="262"/>
        <end position="269"/>
    </location>
</feature>
<feature type="transmembrane region" description="Helical; Name=VII" evidence="2">
    <location>
        <begin position="270"/>
        <end position="286"/>
    </location>
</feature>
<feature type="topological domain" description="Mitochondrial intermembrane" evidence="2">
    <location>
        <begin position="287"/>
        <end position="298"/>
    </location>
</feature>
<feature type="transmembrane region" description="Helical; Name=VIII" evidence="2">
    <location>
        <begin position="299"/>
        <end position="327"/>
    </location>
</feature>
<feature type="topological domain" description="Mitochondrial matrix" evidence="2">
    <location>
        <begin position="328"/>
        <end position="335"/>
    </location>
</feature>
<feature type="transmembrane region" description="Helical; Name=IX" evidence="2">
    <location>
        <begin position="336"/>
        <end position="357"/>
    </location>
</feature>
<feature type="topological domain" description="Mitochondrial intermembrane" evidence="2">
    <location>
        <begin position="358"/>
        <end position="370"/>
    </location>
</feature>
<feature type="transmembrane region" description="Helical; Name=X" evidence="2">
    <location>
        <begin position="371"/>
        <end position="400"/>
    </location>
</feature>
<feature type="topological domain" description="Mitochondrial matrix" evidence="2">
    <location>
        <begin position="401"/>
        <end position="406"/>
    </location>
</feature>
<feature type="transmembrane region" description="Helical; Name=XI" evidence="2">
    <location>
        <begin position="407"/>
        <end position="433"/>
    </location>
</feature>
<feature type="topological domain" description="Mitochondrial intermembrane" evidence="2">
    <location>
        <begin position="434"/>
        <end position="446"/>
    </location>
</feature>
<feature type="transmembrane region" description="Helical; Name=XII" evidence="2">
    <location>
        <begin position="447"/>
        <end position="478"/>
    </location>
</feature>
<feature type="topological domain" description="Mitochondrial matrix" evidence="2">
    <location>
        <begin position="479"/>
        <end position="516"/>
    </location>
</feature>
<feature type="binding site" evidence="2">
    <location>
        <position position="40"/>
    </location>
    <ligand>
        <name>Na(+)</name>
        <dbReference type="ChEBI" id="CHEBI:29101"/>
    </ligand>
</feature>
<feature type="binding site" evidence="2">
    <location>
        <position position="45"/>
    </location>
    <ligand>
        <name>Na(+)</name>
        <dbReference type="ChEBI" id="CHEBI:29101"/>
    </ligand>
</feature>
<feature type="binding site" description="axial binding residue" evidence="2">
    <location>
        <position position="61"/>
    </location>
    <ligand>
        <name>Fe(II)-heme a</name>
        <dbReference type="ChEBI" id="CHEBI:61715"/>
        <note>low-spin</note>
    </ligand>
    <ligandPart>
        <name>Fe</name>
        <dbReference type="ChEBI" id="CHEBI:18248"/>
    </ligandPart>
</feature>
<feature type="binding site" evidence="2">
    <location>
        <position position="240"/>
    </location>
    <ligand>
        <name>Cu cation</name>
        <dbReference type="ChEBI" id="CHEBI:23378"/>
        <label>B</label>
    </ligand>
</feature>
<feature type="binding site" evidence="2">
    <location>
        <position position="244"/>
    </location>
    <ligand>
        <name>O2</name>
        <dbReference type="ChEBI" id="CHEBI:15379"/>
    </ligand>
</feature>
<feature type="binding site" evidence="2">
    <location>
        <position position="290"/>
    </location>
    <ligand>
        <name>Cu cation</name>
        <dbReference type="ChEBI" id="CHEBI:23378"/>
        <label>B</label>
    </ligand>
</feature>
<feature type="binding site" evidence="2">
    <location>
        <position position="291"/>
    </location>
    <ligand>
        <name>Cu cation</name>
        <dbReference type="ChEBI" id="CHEBI:23378"/>
        <label>B</label>
    </ligand>
</feature>
<feature type="binding site" evidence="2">
    <location>
        <position position="368"/>
    </location>
    <ligand>
        <name>Mg(2+)</name>
        <dbReference type="ChEBI" id="CHEBI:18420"/>
        <note>ligand shared with MT-CO2</note>
    </ligand>
</feature>
<feature type="binding site" evidence="2">
    <location>
        <position position="369"/>
    </location>
    <ligand>
        <name>Mg(2+)</name>
        <dbReference type="ChEBI" id="CHEBI:18420"/>
        <note>ligand shared with MT-CO2</note>
    </ligand>
</feature>
<feature type="binding site" description="axial binding residue" evidence="2">
    <location>
        <position position="376"/>
    </location>
    <ligand>
        <name>heme a3</name>
        <dbReference type="ChEBI" id="CHEBI:83282"/>
        <note>high-spin</note>
    </ligand>
    <ligandPart>
        <name>Fe</name>
        <dbReference type="ChEBI" id="CHEBI:18248"/>
    </ligandPart>
</feature>
<feature type="binding site" description="axial binding residue" evidence="2">
    <location>
        <position position="378"/>
    </location>
    <ligand>
        <name>Fe(II)-heme a</name>
        <dbReference type="ChEBI" id="CHEBI:61715"/>
        <note>low-spin</note>
    </ligand>
    <ligandPart>
        <name>Fe</name>
        <dbReference type="ChEBI" id="CHEBI:18248"/>
    </ligandPart>
</feature>
<feature type="binding site" evidence="2">
    <location>
        <position position="441"/>
    </location>
    <ligand>
        <name>Na(+)</name>
        <dbReference type="ChEBI" id="CHEBI:29101"/>
    </ligand>
</feature>
<feature type="cross-link" description="1'-histidyl-3'-tyrosine (His-Tyr)" evidence="2">
    <location>
        <begin position="240"/>
        <end position="244"/>
    </location>
</feature>
<evidence type="ECO:0000250" key="1">
    <source>
        <dbReference type="UniProtKB" id="P00395"/>
    </source>
</evidence>
<evidence type="ECO:0000250" key="2">
    <source>
        <dbReference type="UniProtKB" id="P00396"/>
    </source>
</evidence>
<evidence type="ECO:0000250" key="3">
    <source>
        <dbReference type="UniProtKB" id="P00401"/>
    </source>
</evidence>
<evidence type="ECO:0000305" key="4"/>
<keyword id="KW-0106">Calcium</keyword>
<keyword id="KW-0186">Copper</keyword>
<keyword id="KW-0249">Electron transport</keyword>
<keyword id="KW-0349">Heme</keyword>
<keyword id="KW-0408">Iron</keyword>
<keyword id="KW-0460">Magnesium</keyword>
<keyword id="KW-0472">Membrane</keyword>
<keyword id="KW-0479">Metal-binding</keyword>
<keyword id="KW-0496">Mitochondrion</keyword>
<keyword id="KW-0999">Mitochondrion inner membrane</keyword>
<keyword id="KW-1185">Reference proteome</keyword>
<keyword id="KW-0679">Respiratory chain</keyword>
<keyword id="KW-0915">Sodium</keyword>
<keyword id="KW-1278">Translocase</keyword>
<keyword id="KW-0812">Transmembrane</keyword>
<keyword id="KW-1133">Transmembrane helix</keyword>
<keyword id="KW-0813">Transport</keyword>
<protein>
    <recommendedName>
        <fullName>Cytochrome c oxidase subunit 1</fullName>
        <ecNumber>7.1.1.9</ecNumber>
    </recommendedName>
    <alternativeName>
        <fullName>Cytochrome c oxidase polypeptide I</fullName>
    </alternativeName>
</protein>
<accession>Q9ZZM6</accession>
<sequence>MAITRWFFSTNHKDIGTLYLVFGAWAGMVGTALSLLIRAELSQPGALLGDDQIYNVIVTAHAFVMIFFMVMPIMIGGFGNWLIPLMIGAPDMAFPRMNNMSFWLLPPSFLLLLASSGVEAGAGTGWTVYPPLAGNLAHAGASVDLTIFSLHLAGISSILGAINFITTIINMKPPAISQYQTPLFVWAVLVTAVLLLLSLPVLAAGITMLLTDRNLNTTFFDPAGGGDPILYQHLFWFFGHPEVYILILPGFGMISHIVAYYSGKKEPFGYMGMVWAMMAIGLLGFIVWAHHMFTVGMDVDTRAYFTSATMIIAIPTGVKVFSWLATLHGGSIKWETPLLWALGFIFLFTVGGLTGIVLANSSLDIVLHDTYYVVAHFHYVLSMGAVFAIMGAFVHWFPLFTGYTLHSTWTKIHFGIMFIGVNLTFFPQHFLGLAGMPRRYSDYPDAYTLWNTISSIGSLISLVAVIMFLFILWEAFAAKREVASIEMTSTNVEWLHGCPPPYHTFEEPAFVQVQAS</sequence>
<comment type="function">
    <text evidence="3">Component of the cytochrome c oxidase, the last enzyme in the mitochondrial electron transport chain which drives oxidative phosphorylation. The respiratory chain contains 3 multisubunit complexes succinate dehydrogenase (complex II, CII), ubiquinol-cytochrome c oxidoreductase (cytochrome b-c1 complex, complex III, CIII) and cytochrome c oxidase (complex IV, CIV), that cooperate to transfer electrons derived from NADH and succinate to molecular oxygen, creating an electrochemical gradient over the inner membrane that drives transmembrane transport and the ATP synthase. Cytochrome c oxidase is the component of the respiratory chain that catalyzes the reduction of oxygen to water. Electrons originating from reduced cytochrome c in the intermembrane space (IMS) are transferred via the dinuclear copper A center (CU(A)) of subunit 2 and heme A of subunit 1 to the active site in subunit 1, a binuclear center (BNC) formed by heme A3 and copper B (CU(B)). The BNC reduces molecular oxygen to 2 water molecules using 4 electrons from cytochrome c in the IMS and 4 protons from the mitochondrial matrix.</text>
</comment>
<comment type="catalytic activity">
    <reaction evidence="3">
        <text>4 Fe(II)-[cytochrome c] + O2 + 8 H(+)(in) = 4 Fe(III)-[cytochrome c] + 2 H2O + 4 H(+)(out)</text>
        <dbReference type="Rhea" id="RHEA:11436"/>
        <dbReference type="Rhea" id="RHEA-COMP:10350"/>
        <dbReference type="Rhea" id="RHEA-COMP:14399"/>
        <dbReference type="ChEBI" id="CHEBI:15377"/>
        <dbReference type="ChEBI" id="CHEBI:15378"/>
        <dbReference type="ChEBI" id="CHEBI:15379"/>
        <dbReference type="ChEBI" id="CHEBI:29033"/>
        <dbReference type="ChEBI" id="CHEBI:29034"/>
        <dbReference type="EC" id="7.1.1.9"/>
    </reaction>
    <physiologicalReaction direction="left-to-right" evidence="3">
        <dbReference type="Rhea" id="RHEA:11437"/>
    </physiologicalReaction>
</comment>
<comment type="cofactor">
    <cofactor evidence="2">
        <name>heme</name>
        <dbReference type="ChEBI" id="CHEBI:30413"/>
    </cofactor>
    <text evidence="2">Binds 2 heme A groups non-covalently per subunit.</text>
</comment>
<comment type="cofactor">
    <cofactor evidence="2">
        <name>Cu cation</name>
        <dbReference type="ChEBI" id="CHEBI:23378"/>
    </cofactor>
    <text evidence="2">Binds a copper B center.</text>
</comment>
<comment type="pathway">
    <text evidence="3">Energy metabolism; oxidative phosphorylation.</text>
</comment>
<comment type="subunit">
    <text evidence="1 2">Component of the cytochrome c oxidase (complex IV, CIV), a multisubunit enzyme composed of 14 subunits. The complex is composed of a catalytic core of 3 subunits MT-CO1, MT-CO2 and MT-CO3, encoded in the mitochondrial DNA, and 11 supernumerary subunits COX4I, COX5A, COX5B, COX6A, COX6B, COX6C, COX7A, COX7B, COX7C, COX8 and NDUFA4, which are encoded in the nuclear genome. The complex exists as a monomer or a dimer and forms supercomplexes (SCs) in the inner mitochondrial membrane with NADH-ubiquinone oxidoreductase (complex I, CI) and ubiquinol-cytochrome c oxidoreductase (cytochrome b-c1 complex, complex III, CIII), resulting in different assemblies (supercomplex SCI(1)III(2)IV(1) and megacomplex MCI(2)III(2)IV(2)) (By similarity). As a newly synthesized protein, rapidly incorporates into a multi-subunit assembly intermediate in the inner membrane, called MITRAC (mitochondrial translation regulation assembly intermediate of cytochrome c oxidase) complex, whose core components are COA3/MITRAC12 and COX14. Within the MITRAC complex, interacts with COA3 and with SMIM20/MITRAC7; the interaction with SMIM20 stabilizes the newly synthesized MT-CO1 and prevents its premature turnover. Interacts with TMEM177 in a COX20-dependent manner (By similarity).</text>
</comment>
<comment type="subcellular location">
    <subcellularLocation>
        <location evidence="2">Mitochondrion inner membrane</location>
        <topology evidence="2">Multi-pass membrane protein</topology>
    </subcellularLocation>
</comment>
<comment type="similarity">
    <text evidence="4">Belongs to the heme-copper respiratory oxidase family.</text>
</comment>
<organism>
    <name type="scientific">Salmo salar</name>
    <name type="common">Atlantic salmon</name>
    <dbReference type="NCBI Taxonomy" id="8030"/>
    <lineage>
        <taxon>Eukaryota</taxon>
        <taxon>Metazoa</taxon>
        <taxon>Chordata</taxon>
        <taxon>Craniata</taxon>
        <taxon>Vertebrata</taxon>
        <taxon>Euteleostomi</taxon>
        <taxon>Actinopterygii</taxon>
        <taxon>Neopterygii</taxon>
        <taxon>Teleostei</taxon>
        <taxon>Protacanthopterygii</taxon>
        <taxon>Salmoniformes</taxon>
        <taxon>Salmonidae</taxon>
        <taxon>Salmoninae</taxon>
        <taxon>Salmo</taxon>
    </lineage>
</organism>
<gene>
    <name type="primary">mt-co1</name>
    <name type="synonym">coi</name>
    <name type="synonym">coxi</name>
    <name type="synonym">mtco1</name>
</gene>
<proteinExistence type="inferred from homology"/>
<reference key="1">
    <citation type="journal article" date="1999" name="Gene">
        <title>The complete mitochondrial DNA sequence of the Atlantic salmon, Salmo salar.</title>
        <authorList>
            <person name="Hurst C.D."/>
            <person name="Bartlett S.E."/>
            <person name="Davidson W.S."/>
            <person name="Bruce I.J."/>
        </authorList>
    </citation>
    <scope>NUCLEOTIDE SEQUENCE [GENOMIC DNA]</scope>
    <source>
        <tissue>Liver</tissue>
    </source>
</reference>
<reference key="2">
    <citation type="submission" date="1999-03" db="EMBL/GenBank/DDBJ databases">
        <title>The complete mitochondrial genome sequence of a teleost, Salmo salar, and comparisons with other salmoniformes.</title>
        <authorList>
            <person name="Arnason U."/>
            <person name="Johnsson E."/>
            <person name="Rasmussen A.S."/>
        </authorList>
    </citation>
    <scope>NUCLEOTIDE SEQUENCE [GENOMIC DNA]</scope>
</reference>
<name>COX1_SALSA</name>
<geneLocation type="mitochondrion"/>
<dbReference type="EC" id="7.1.1.9"/>
<dbReference type="EMBL" id="U12143">
    <property type="protein sequence ID" value="AAD04735.1"/>
    <property type="molecule type" value="Genomic_DNA"/>
</dbReference>
<dbReference type="EMBL" id="AF133701">
    <property type="protein sequence ID" value="AAF61380.1"/>
    <property type="molecule type" value="Genomic_DNA"/>
</dbReference>
<dbReference type="PIR" id="T09949">
    <property type="entry name" value="T09949"/>
</dbReference>
<dbReference type="RefSeq" id="NP_008447.1">
    <property type="nucleotide sequence ID" value="NC_001960.1"/>
</dbReference>
<dbReference type="SMR" id="Q9ZZM6"/>
<dbReference type="STRING" id="8030.ENSSSAP00000000004"/>
<dbReference type="PaxDb" id="8030-ENSSSAP00000000004"/>
<dbReference type="GeneID" id="808314"/>
<dbReference type="KEGG" id="sasa:808314"/>
<dbReference type="CTD" id="4512"/>
<dbReference type="UniPathway" id="UPA00705"/>
<dbReference type="Proteomes" id="UP000087266">
    <property type="component" value="Mitochondrion MT"/>
</dbReference>
<dbReference type="Bgee" id="ENSSSAG00000000017">
    <property type="expression patterns" value="Expressed in gill filament and 26 other cell types or tissues"/>
</dbReference>
<dbReference type="GO" id="GO:0005743">
    <property type="term" value="C:mitochondrial inner membrane"/>
    <property type="evidence" value="ECO:0007669"/>
    <property type="project" value="UniProtKB-SubCell"/>
</dbReference>
<dbReference type="GO" id="GO:0045277">
    <property type="term" value="C:respiratory chain complex IV"/>
    <property type="evidence" value="ECO:0000250"/>
    <property type="project" value="UniProtKB"/>
</dbReference>
<dbReference type="GO" id="GO:0004129">
    <property type="term" value="F:cytochrome-c oxidase activity"/>
    <property type="evidence" value="ECO:0007669"/>
    <property type="project" value="UniProtKB-EC"/>
</dbReference>
<dbReference type="GO" id="GO:0020037">
    <property type="term" value="F:heme binding"/>
    <property type="evidence" value="ECO:0007669"/>
    <property type="project" value="InterPro"/>
</dbReference>
<dbReference type="GO" id="GO:0046872">
    <property type="term" value="F:metal ion binding"/>
    <property type="evidence" value="ECO:0007669"/>
    <property type="project" value="UniProtKB-KW"/>
</dbReference>
<dbReference type="GO" id="GO:0015990">
    <property type="term" value="P:electron transport coupled proton transport"/>
    <property type="evidence" value="ECO:0007669"/>
    <property type="project" value="TreeGrafter"/>
</dbReference>
<dbReference type="GO" id="GO:0006123">
    <property type="term" value="P:mitochondrial electron transport, cytochrome c to oxygen"/>
    <property type="evidence" value="ECO:0007669"/>
    <property type="project" value="TreeGrafter"/>
</dbReference>
<dbReference type="CDD" id="cd01663">
    <property type="entry name" value="Cyt_c_Oxidase_I"/>
    <property type="match status" value="1"/>
</dbReference>
<dbReference type="FunFam" id="1.20.210.10:FF:000001">
    <property type="entry name" value="Cytochrome c oxidase subunit 1"/>
    <property type="match status" value="1"/>
</dbReference>
<dbReference type="Gene3D" id="1.20.210.10">
    <property type="entry name" value="Cytochrome c oxidase-like, subunit I domain"/>
    <property type="match status" value="1"/>
</dbReference>
<dbReference type="InterPro" id="IPR023616">
    <property type="entry name" value="Cyt_c_oxase-like_su1_dom"/>
</dbReference>
<dbReference type="InterPro" id="IPR036927">
    <property type="entry name" value="Cyt_c_oxase-like_su1_sf"/>
</dbReference>
<dbReference type="InterPro" id="IPR000883">
    <property type="entry name" value="Cyt_C_Oxase_1"/>
</dbReference>
<dbReference type="InterPro" id="IPR023615">
    <property type="entry name" value="Cyt_c_Oxase_su1_BS"/>
</dbReference>
<dbReference type="InterPro" id="IPR033944">
    <property type="entry name" value="Cyt_c_oxase_su1_dom"/>
</dbReference>
<dbReference type="PANTHER" id="PTHR10422">
    <property type="entry name" value="CYTOCHROME C OXIDASE SUBUNIT 1"/>
    <property type="match status" value="1"/>
</dbReference>
<dbReference type="PANTHER" id="PTHR10422:SF18">
    <property type="entry name" value="CYTOCHROME C OXIDASE SUBUNIT 1"/>
    <property type="match status" value="1"/>
</dbReference>
<dbReference type="Pfam" id="PF00115">
    <property type="entry name" value="COX1"/>
    <property type="match status" value="1"/>
</dbReference>
<dbReference type="PRINTS" id="PR01165">
    <property type="entry name" value="CYCOXIDASEI"/>
</dbReference>
<dbReference type="SUPFAM" id="SSF81442">
    <property type="entry name" value="Cytochrome c oxidase subunit I-like"/>
    <property type="match status" value="1"/>
</dbReference>
<dbReference type="PROSITE" id="PS50855">
    <property type="entry name" value="COX1"/>
    <property type="match status" value="1"/>
</dbReference>
<dbReference type="PROSITE" id="PS00077">
    <property type="entry name" value="COX1_CUB"/>
    <property type="match status" value="1"/>
</dbReference>